<dbReference type="EC" id="5.1.3.29" evidence="1"/>
<dbReference type="EMBL" id="CP000026">
    <property type="protein sequence ID" value="AAV78690.1"/>
    <property type="molecule type" value="Genomic_DNA"/>
</dbReference>
<dbReference type="RefSeq" id="WP_000920848.1">
    <property type="nucleotide sequence ID" value="NC_006511.1"/>
</dbReference>
<dbReference type="SMR" id="Q5PEK7"/>
<dbReference type="KEGG" id="spt:SPA2842"/>
<dbReference type="HOGENOM" id="CLU_120075_1_0_6"/>
<dbReference type="UniPathway" id="UPA00956"/>
<dbReference type="Proteomes" id="UP000008185">
    <property type="component" value="Chromosome"/>
</dbReference>
<dbReference type="GO" id="GO:0005737">
    <property type="term" value="C:cytoplasm"/>
    <property type="evidence" value="ECO:0007669"/>
    <property type="project" value="UniProtKB-SubCell"/>
</dbReference>
<dbReference type="GO" id="GO:0042806">
    <property type="term" value="F:fucose binding"/>
    <property type="evidence" value="ECO:0007669"/>
    <property type="project" value="InterPro"/>
</dbReference>
<dbReference type="GO" id="GO:0036373">
    <property type="term" value="F:L-fucose mutarotase activity"/>
    <property type="evidence" value="ECO:0007669"/>
    <property type="project" value="UniProtKB-EC"/>
</dbReference>
<dbReference type="GO" id="GO:0036065">
    <property type="term" value="P:fucosylation"/>
    <property type="evidence" value="ECO:0007669"/>
    <property type="project" value="TreeGrafter"/>
</dbReference>
<dbReference type="GO" id="GO:0042354">
    <property type="term" value="P:L-fucose metabolic process"/>
    <property type="evidence" value="ECO:0007669"/>
    <property type="project" value="UniProtKB-UniRule"/>
</dbReference>
<dbReference type="FunFam" id="3.40.1650.10:FF:000001">
    <property type="entry name" value="L-fucose mutarotase"/>
    <property type="match status" value="1"/>
</dbReference>
<dbReference type="Gene3D" id="3.40.1650.10">
    <property type="entry name" value="RbsD-like domain"/>
    <property type="match status" value="1"/>
</dbReference>
<dbReference type="HAMAP" id="MF_01662">
    <property type="entry name" value="L_fucose_rotase"/>
    <property type="match status" value="1"/>
</dbReference>
<dbReference type="InterPro" id="IPR023751">
    <property type="entry name" value="L-fucose_mutarotase"/>
</dbReference>
<dbReference type="InterPro" id="IPR023750">
    <property type="entry name" value="RbsD-like_sf"/>
</dbReference>
<dbReference type="InterPro" id="IPR050443">
    <property type="entry name" value="RbsD/FucU_mutarotase"/>
</dbReference>
<dbReference type="InterPro" id="IPR007721">
    <property type="entry name" value="RbsD_FucU"/>
</dbReference>
<dbReference type="NCBIfam" id="NF011949">
    <property type="entry name" value="PRK15420.1"/>
    <property type="match status" value="1"/>
</dbReference>
<dbReference type="PANTHER" id="PTHR31690">
    <property type="entry name" value="FUCOSE MUTAROTASE"/>
    <property type="match status" value="1"/>
</dbReference>
<dbReference type="PANTHER" id="PTHR31690:SF4">
    <property type="entry name" value="FUCOSE MUTAROTASE"/>
    <property type="match status" value="1"/>
</dbReference>
<dbReference type="Pfam" id="PF05025">
    <property type="entry name" value="RbsD_FucU"/>
    <property type="match status" value="1"/>
</dbReference>
<dbReference type="SUPFAM" id="SSF102546">
    <property type="entry name" value="RbsD-like"/>
    <property type="match status" value="1"/>
</dbReference>
<name>FUCM_SALPA</name>
<proteinExistence type="inferred from homology"/>
<keyword id="KW-0119">Carbohydrate metabolism</keyword>
<keyword id="KW-0963">Cytoplasm</keyword>
<keyword id="KW-0294">Fucose metabolism</keyword>
<keyword id="KW-0413">Isomerase</keyword>
<feature type="chain" id="PRO_1000187197" description="L-fucose mutarotase">
    <location>
        <begin position="1"/>
        <end position="140"/>
    </location>
</feature>
<feature type="active site" description="Proton donor" evidence="1">
    <location>
        <position position="22"/>
    </location>
</feature>
<feature type="binding site" evidence="1">
    <location>
        <position position="30"/>
    </location>
    <ligand>
        <name>substrate</name>
    </ligand>
</feature>
<feature type="binding site" evidence="1">
    <location>
        <position position="107"/>
    </location>
    <ligand>
        <name>substrate</name>
    </ligand>
</feature>
<feature type="binding site" evidence="1">
    <location>
        <begin position="129"/>
        <end position="131"/>
    </location>
    <ligand>
        <name>substrate</name>
    </ligand>
</feature>
<protein>
    <recommendedName>
        <fullName evidence="1">L-fucose mutarotase</fullName>
        <ecNumber evidence="1">5.1.3.29</ecNumber>
    </recommendedName>
    <alternativeName>
        <fullName evidence="1">Fucose 1-epimerase</fullName>
    </alternativeName>
    <alternativeName>
        <fullName evidence="1">Type-2 mutarotase</fullName>
    </alternativeName>
</protein>
<sequence length="140" mass="15254">MLKTISPLISPTLLKVLAEMGHGDEIIFSDAHFPAHSLGPQVIRADGLSVSDLLRAIIPLFELDSYAPPLVMMAAVEGDTLDPSVEARYRDALSLEAPCPDIVRIDRYAFYERAQKAFAIVITGECAKYGNILLKKGVTP</sequence>
<comment type="function">
    <text evidence="1">Involved in the anomeric conversion of L-fucose.</text>
</comment>
<comment type="catalytic activity">
    <reaction evidence="1">
        <text>alpha-L-fucose = beta-L-fucose</text>
        <dbReference type="Rhea" id="RHEA:25580"/>
        <dbReference type="ChEBI" id="CHEBI:42548"/>
        <dbReference type="ChEBI" id="CHEBI:42589"/>
        <dbReference type="EC" id="5.1.3.29"/>
    </reaction>
</comment>
<comment type="pathway">
    <text evidence="1">Carbohydrate metabolism; L-fucose metabolism.</text>
</comment>
<comment type="subunit">
    <text evidence="1">Homodecamer.</text>
</comment>
<comment type="subcellular location">
    <subcellularLocation>
        <location evidence="1">Cytoplasm</location>
    </subcellularLocation>
</comment>
<comment type="similarity">
    <text evidence="1">Belongs to the RbsD / FucU family. FucU mutarotase subfamily.</text>
</comment>
<accession>Q5PEK7</accession>
<reference key="1">
    <citation type="journal article" date="2004" name="Nat. Genet.">
        <title>Comparison of genome degradation in Paratyphi A and Typhi, human-restricted serovars of Salmonella enterica that cause typhoid.</title>
        <authorList>
            <person name="McClelland M."/>
            <person name="Sanderson K.E."/>
            <person name="Clifton S.W."/>
            <person name="Latreille P."/>
            <person name="Porwollik S."/>
            <person name="Sabo A."/>
            <person name="Meyer R."/>
            <person name="Bieri T."/>
            <person name="Ozersky P."/>
            <person name="McLellan M."/>
            <person name="Harkins C.R."/>
            <person name="Wang C."/>
            <person name="Nguyen C."/>
            <person name="Berghoff A."/>
            <person name="Elliott G."/>
            <person name="Kohlberg S."/>
            <person name="Strong C."/>
            <person name="Du F."/>
            <person name="Carter J."/>
            <person name="Kremizki C."/>
            <person name="Layman D."/>
            <person name="Leonard S."/>
            <person name="Sun H."/>
            <person name="Fulton L."/>
            <person name="Nash W."/>
            <person name="Miner T."/>
            <person name="Minx P."/>
            <person name="Delehaunty K."/>
            <person name="Fronick C."/>
            <person name="Magrini V."/>
            <person name="Nhan M."/>
            <person name="Warren W."/>
            <person name="Florea L."/>
            <person name="Spieth J."/>
            <person name="Wilson R.K."/>
        </authorList>
    </citation>
    <scope>NUCLEOTIDE SEQUENCE [LARGE SCALE GENOMIC DNA]</scope>
    <source>
        <strain>ATCC 9150 / SARB42</strain>
    </source>
</reference>
<evidence type="ECO:0000255" key="1">
    <source>
        <dbReference type="HAMAP-Rule" id="MF_01662"/>
    </source>
</evidence>
<organism>
    <name type="scientific">Salmonella paratyphi A (strain ATCC 9150 / SARB42)</name>
    <dbReference type="NCBI Taxonomy" id="295319"/>
    <lineage>
        <taxon>Bacteria</taxon>
        <taxon>Pseudomonadati</taxon>
        <taxon>Pseudomonadota</taxon>
        <taxon>Gammaproteobacteria</taxon>
        <taxon>Enterobacterales</taxon>
        <taxon>Enterobacteriaceae</taxon>
        <taxon>Salmonella</taxon>
    </lineage>
</organism>
<gene>
    <name evidence="1" type="primary">fucU</name>
    <name type="ordered locus">SPA2842</name>
</gene>